<reference key="1">
    <citation type="journal article" date="2008" name="Genomics">
        <title>Evolution in the laboratory: the genome of Halobacterium salinarum strain R1 compared to that of strain NRC-1.</title>
        <authorList>
            <person name="Pfeiffer F."/>
            <person name="Schuster S.C."/>
            <person name="Broicher A."/>
            <person name="Falb M."/>
            <person name="Palm P."/>
            <person name="Rodewald K."/>
            <person name="Ruepp A."/>
            <person name="Soppa J."/>
            <person name="Tittor J."/>
            <person name="Oesterhelt D."/>
        </authorList>
    </citation>
    <scope>NUCLEOTIDE SEQUENCE [LARGE SCALE GENOMIC DNA]</scope>
    <source>
        <strain>ATCC 29341 / DSM 671 / R1</strain>
    </source>
</reference>
<organism>
    <name type="scientific">Halobacterium salinarum (strain ATCC 29341 / DSM 671 / R1)</name>
    <dbReference type="NCBI Taxonomy" id="478009"/>
    <lineage>
        <taxon>Archaea</taxon>
        <taxon>Methanobacteriati</taxon>
        <taxon>Methanobacteriota</taxon>
        <taxon>Stenosarchaea group</taxon>
        <taxon>Halobacteria</taxon>
        <taxon>Halobacteriales</taxon>
        <taxon>Halobacteriaceae</taxon>
        <taxon>Halobacterium</taxon>
        <taxon>Halobacterium salinarum NRC-34001</taxon>
    </lineage>
</organism>
<gene>
    <name evidence="1" type="primary">rps27ae</name>
    <name type="ordered locus">OE_3868R</name>
</gene>
<sequence>MARGDYYSDDGTTDKEMCPRCGDTFLAAHDDRQVCGRCGYTEWE</sequence>
<dbReference type="EMBL" id="AM774415">
    <property type="protein sequence ID" value="CAP14500.1"/>
    <property type="molecule type" value="Genomic_DNA"/>
</dbReference>
<dbReference type="RefSeq" id="WP_010903506.1">
    <property type="nucleotide sequence ID" value="NC_010364.1"/>
</dbReference>
<dbReference type="EnsemblBacteria" id="CAP14500">
    <property type="protein sequence ID" value="CAP14500"/>
    <property type="gene ID" value="OE_3868R"/>
</dbReference>
<dbReference type="KEGG" id="hsl:OE_3868R"/>
<dbReference type="HOGENOM" id="CLU_179743_2_0_2"/>
<dbReference type="PhylomeDB" id="B0R6Y1"/>
<dbReference type="Proteomes" id="UP000001321">
    <property type="component" value="Chromosome"/>
</dbReference>
<dbReference type="GO" id="GO:1990904">
    <property type="term" value="C:ribonucleoprotein complex"/>
    <property type="evidence" value="ECO:0007669"/>
    <property type="project" value="UniProtKB-KW"/>
</dbReference>
<dbReference type="GO" id="GO:0005840">
    <property type="term" value="C:ribosome"/>
    <property type="evidence" value="ECO:0007669"/>
    <property type="project" value="UniProtKB-KW"/>
</dbReference>
<dbReference type="GO" id="GO:0003735">
    <property type="term" value="F:structural constituent of ribosome"/>
    <property type="evidence" value="ECO:0007669"/>
    <property type="project" value="InterPro"/>
</dbReference>
<dbReference type="GO" id="GO:0008270">
    <property type="term" value="F:zinc ion binding"/>
    <property type="evidence" value="ECO:0007669"/>
    <property type="project" value="UniProtKB-UniRule"/>
</dbReference>
<dbReference type="GO" id="GO:0006412">
    <property type="term" value="P:translation"/>
    <property type="evidence" value="ECO:0007669"/>
    <property type="project" value="UniProtKB-UniRule"/>
</dbReference>
<dbReference type="Gene3D" id="6.20.50.180">
    <property type="match status" value="1"/>
</dbReference>
<dbReference type="HAMAP" id="MF_00777">
    <property type="entry name" value="Ribosomal_eS31"/>
    <property type="match status" value="1"/>
</dbReference>
<dbReference type="InterPro" id="IPR002906">
    <property type="entry name" value="Ribosomal_eS31"/>
</dbReference>
<dbReference type="InterPro" id="IPR022845">
    <property type="entry name" value="Ribosomal_eS31_arc"/>
</dbReference>
<dbReference type="InterPro" id="IPR011332">
    <property type="entry name" value="Ribosomal_zn-bd"/>
</dbReference>
<dbReference type="NCBIfam" id="NF001669">
    <property type="entry name" value="PRK00432.1"/>
    <property type="match status" value="1"/>
</dbReference>
<dbReference type="Pfam" id="PF01599">
    <property type="entry name" value="Ribosomal_S27"/>
    <property type="match status" value="1"/>
</dbReference>
<dbReference type="SMART" id="SM01402">
    <property type="entry name" value="Ribosomal_S27"/>
    <property type="match status" value="1"/>
</dbReference>
<dbReference type="SUPFAM" id="SSF57829">
    <property type="entry name" value="Zn-binding ribosomal proteins"/>
    <property type="match status" value="1"/>
</dbReference>
<protein>
    <recommendedName>
        <fullName evidence="1">Small ribosomal subunit protein eS31</fullName>
    </recommendedName>
    <alternativeName>
        <fullName evidence="2">30S ribosomal protein S27ae</fullName>
    </alternativeName>
</protein>
<proteinExistence type="inferred from homology"/>
<comment type="cofactor">
    <cofactor evidence="1">
        <name>Zn(2+)</name>
        <dbReference type="ChEBI" id="CHEBI:29105"/>
    </cofactor>
    <text evidence="1">Binds 1 zinc ion per subunit.</text>
</comment>
<comment type="subunit">
    <text evidence="1">Part of the 30S ribosomal subunit.</text>
</comment>
<comment type="similarity">
    <text evidence="1">Belongs to the eukaryotic ribosomal protein eS31 family.</text>
</comment>
<name>RS27A_HALS3</name>
<accession>B0R6Y1</accession>
<evidence type="ECO:0000255" key="1">
    <source>
        <dbReference type="HAMAP-Rule" id="MF_00777"/>
    </source>
</evidence>
<evidence type="ECO:0000305" key="2"/>
<keyword id="KW-0479">Metal-binding</keyword>
<keyword id="KW-0687">Ribonucleoprotein</keyword>
<keyword id="KW-0689">Ribosomal protein</keyword>
<keyword id="KW-0862">Zinc</keyword>
<keyword id="KW-0863">Zinc-finger</keyword>
<feature type="chain" id="PRO_1000194300" description="Small ribosomal subunit protein eS31">
    <location>
        <begin position="1"/>
        <end position="44"/>
    </location>
</feature>
<feature type="zinc finger region" description="C4-type" evidence="1">
    <location>
        <begin position="18"/>
        <end position="38"/>
    </location>
</feature>
<feature type="binding site" evidence="1">
    <location>
        <position position="18"/>
    </location>
    <ligand>
        <name>Zn(2+)</name>
        <dbReference type="ChEBI" id="CHEBI:29105"/>
    </ligand>
</feature>
<feature type="binding site" evidence="1">
    <location>
        <position position="21"/>
    </location>
    <ligand>
        <name>Zn(2+)</name>
        <dbReference type="ChEBI" id="CHEBI:29105"/>
    </ligand>
</feature>
<feature type="binding site" evidence="1">
    <location>
        <position position="35"/>
    </location>
    <ligand>
        <name>Zn(2+)</name>
        <dbReference type="ChEBI" id="CHEBI:29105"/>
    </ligand>
</feature>
<feature type="binding site" evidence="1">
    <location>
        <position position="38"/>
    </location>
    <ligand>
        <name>Zn(2+)</name>
        <dbReference type="ChEBI" id="CHEBI:29105"/>
    </ligand>
</feature>